<feature type="chain" id="PRO_1000204607" description="Glycine--tRNA ligase beta subunit">
    <location>
        <begin position="1"/>
        <end position="688"/>
    </location>
</feature>
<protein>
    <recommendedName>
        <fullName evidence="1">Glycine--tRNA ligase beta subunit</fullName>
        <ecNumber evidence="1">6.1.1.14</ecNumber>
    </recommendedName>
    <alternativeName>
        <fullName evidence="1">Glycyl-tRNA synthetase beta subunit</fullName>
        <shortName evidence="1">GlyRS</shortName>
    </alternativeName>
</protein>
<comment type="catalytic activity">
    <reaction evidence="1">
        <text>tRNA(Gly) + glycine + ATP = glycyl-tRNA(Gly) + AMP + diphosphate</text>
        <dbReference type="Rhea" id="RHEA:16013"/>
        <dbReference type="Rhea" id="RHEA-COMP:9664"/>
        <dbReference type="Rhea" id="RHEA-COMP:9683"/>
        <dbReference type="ChEBI" id="CHEBI:30616"/>
        <dbReference type="ChEBI" id="CHEBI:33019"/>
        <dbReference type="ChEBI" id="CHEBI:57305"/>
        <dbReference type="ChEBI" id="CHEBI:78442"/>
        <dbReference type="ChEBI" id="CHEBI:78522"/>
        <dbReference type="ChEBI" id="CHEBI:456215"/>
        <dbReference type="EC" id="6.1.1.14"/>
    </reaction>
</comment>
<comment type="subunit">
    <text evidence="1">Tetramer of two alpha and two beta subunits.</text>
</comment>
<comment type="subcellular location">
    <subcellularLocation>
        <location evidence="1">Cytoplasm</location>
    </subcellularLocation>
</comment>
<comment type="similarity">
    <text evidence="1">Belongs to the class-II aminoacyl-tRNA synthetase family.</text>
</comment>
<name>SYGB_LISMC</name>
<reference key="1">
    <citation type="journal article" date="2012" name="BMC Genomics">
        <title>Comparative genomics and transcriptomics of lineages I, II, and III strains of Listeria monocytogenes.</title>
        <authorList>
            <person name="Hain T."/>
            <person name="Ghai R."/>
            <person name="Billion A."/>
            <person name="Kuenne C.T."/>
            <person name="Steinweg C."/>
            <person name="Izar B."/>
            <person name="Mohamed W."/>
            <person name="Mraheil M."/>
            <person name="Domann E."/>
            <person name="Schaffrath S."/>
            <person name="Karst U."/>
            <person name="Goesmann A."/>
            <person name="Oehm S."/>
            <person name="Puhler A."/>
            <person name="Merkl R."/>
            <person name="Vorwerk S."/>
            <person name="Glaser P."/>
            <person name="Garrido P."/>
            <person name="Rusniok C."/>
            <person name="Buchrieser C."/>
            <person name="Goebel W."/>
            <person name="Chakraborty T."/>
        </authorList>
    </citation>
    <scope>NUCLEOTIDE SEQUENCE [LARGE SCALE GENOMIC DNA]</scope>
    <source>
        <strain>CLIP80459</strain>
    </source>
</reference>
<accession>C1KVA5</accession>
<dbReference type="EC" id="6.1.1.14" evidence="1"/>
<dbReference type="EMBL" id="FM242711">
    <property type="protein sequence ID" value="CAS05230.1"/>
    <property type="molecule type" value="Genomic_DNA"/>
</dbReference>
<dbReference type="RefSeq" id="WP_003726011.1">
    <property type="nucleotide sequence ID" value="NC_012488.1"/>
</dbReference>
<dbReference type="SMR" id="C1KVA5"/>
<dbReference type="KEGG" id="lmc:Lm4b_01468"/>
<dbReference type="HOGENOM" id="CLU_007220_2_2_9"/>
<dbReference type="GO" id="GO:0005829">
    <property type="term" value="C:cytosol"/>
    <property type="evidence" value="ECO:0007669"/>
    <property type="project" value="TreeGrafter"/>
</dbReference>
<dbReference type="GO" id="GO:0004814">
    <property type="term" value="F:arginine-tRNA ligase activity"/>
    <property type="evidence" value="ECO:0007669"/>
    <property type="project" value="InterPro"/>
</dbReference>
<dbReference type="GO" id="GO:0005524">
    <property type="term" value="F:ATP binding"/>
    <property type="evidence" value="ECO:0007669"/>
    <property type="project" value="UniProtKB-UniRule"/>
</dbReference>
<dbReference type="GO" id="GO:0004820">
    <property type="term" value="F:glycine-tRNA ligase activity"/>
    <property type="evidence" value="ECO:0007669"/>
    <property type="project" value="UniProtKB-UniRule"/>
</dbReference>
<dbReference type="GO" id="GO:0006420">
    <property type="term" value="P:arginyl-tRNA aminoacylation"/>
    <property type="evidence" value="ECO:0007669"/>
    <property type="project" value="InterPro"/>
</dbReference>
<dbReference type="GO" id="GO:0006426">
    <property type="term" value="P:glycyl-tRNA aminoacylation"/>
    <property type="evidence" value="ECO:0007669"/>
    <property type="project" value="UniProtKB-UniRule"/>
</dbReference>
<dbReference type="HAMAP" id="MF_00255">
    <property type="entry name" value="Gly_tRNA_synth_beta"/>
    <property type="match status" value="1"/>
</dbReference>
<dbReference type="InterPro" id="IPR008909">
    <property type="entry name" value="DALR_anticod-bd"/>
</dbReference>
<dbReference type="InterPro" id="IPR015944">
    <property type="entry name" value="Gly-tRNA-synth_bsu"/>
</dbReference>
<dbReference type="InterPro" id="IPR006194">
    <property type="entry name" value="Gly-tRNA-synth_heterodimer"/>
</dbReference>
<dbReference type="NCBIfam" id="TIGR00211">
    <property type="entry name" value="glyS"/>
    <property type="match status" value="1"/>
</dbReference>
<dbReference type="PANTHER" id="PTHR30075:SF2">
    <property type="entry name" value="GLYCINE--TRNA LIGASE, CHLOROPLASTIC_MITOCHONDRIAL 2"/>
    <property type="match status" value="1"/>
</dbReference>
<dbReference type="PANTHER" id="PTHR30075">
    <property type="entry name" value="GLYCYL-TRNA SYNTHETASE"/>
    <property type="match status" value="1"/>
</dbReference>
<dbReference type="Pfam" id="PF05746">
    <property type="entry name" value="DALR_1"/>
    <property type="match status" value="1"/>
</dbReference>
<dbReference type="Pfam" id="PF02092">
    <property type="entry name" value="tRNA_synt_2f"/>
    <property type="match status" value="1"/>
</dbReference>
<dbReference type="PRINTS" id="PR01045">
    <property type="entry name" value="TRNASYNTHGB"/>
</dbReference>
<dbReference type="SUPFAM" id="SSF109604">
    <property type="entry name" value="HD-domain/PDEase-like"/>
    <property type="match status" value="1"/>
</dbReference>
<dbReference type="PROSITE" id="PS50861">
    <property type="entry name" value="AA_TRNA_LIGASE_II_GLYAB"/>
    <property type="match status" value="1"/>
</dbReference>
<gene>
    <name evidence="1" type="primary">glyS</name>
    <name type="ordered locus">Lm4b_01468</name>
</gene>
<keyword id="KW-0030">Aminoacyl-tRNA synthetase</keyword>
<keyword id="KW-0067">ATP-binding</keyword>
<keyword id="KW-0963">Cytoplasm</keyword>
<keyword id="KW-0436">Ligase</keyword>
<keyword id="KW-0547">Nucleotide-binding</keyword>
<keyword id="KW-0648">Protein biosynthesis</keyword>
<sequence length="688" mass="78502">MSKDFLLEIGLEEMPAKYVTSSVLQLEKRVTDWLKDNQIEFKEIKTYSTPRRLTVLVEEMAEEQANRVEEAKGPAKKIALDDEGNWSKAALGFAKSQKVAPEDLTFREIKGVEYIYIKKEVIGEKTTALLPSLEKVVTSMTFPVSMHWGSNDLRYIRPIKWLIAMFGEEIIPFEITGVSTSNTSRGHRFLGKTATINQPSDYPNALLEQFVVVNASERKQAIVEQLRELETMENWQIREDDDLLEEVTNLVEYPTVLAGNFEKEYLELPEEVLITTMKEHQRYFPVFSQEGELLPHFVTVRNGNHENLDTVARGNEKVLRARLSDADFFYQEDLKITIDEAVAKLQNIVFHEKLGTLTEKMKRVQKVALMLADYLNWQEEDKQDIIRLTNIYKFDLVTNIVGEFPELQGLMGEKYALLQGEKPAIATAIREHYLPSSAEGDLPQTDLGSLIAIADKLETLIGFFCVNIAPTGSADPFGLRRSAFGAVRIIQANGWDIPMLEVVSRIVDMERAEGATELPSSDVIKEVQTFLKNRLRVILQGHHIRHDIIDAVIGGDPNMIPQLIDRAQILNKHADAEWFRPTIEALTRVVNISKKYEDGVEVDPSLFENEYEQALFDKLEKLKFDFAGLKIVDRLKAFADLRTTIDAYFDNTLVMTDNDELKNNRLALLFELASFIKEFAQMDEINVK</sequence>
<organism>
    <name type="scientific">Listeria monocytogenes serotype 4b (strain CLIP80459)</name>
    <dbReference type="NCBI Taxonomy" id="568819"/>
    <lineage>
        <taxon>Bacteria</taxon>
        <taxon>Bacillati</taxon>
        <taxon>Bacillota</taxon>
        <taxon>Bacilli</taxon>
        <taxon>Bacillales</taxon>
        <taxon>Listeriaceae</taxon>
        <taxon>Listeria</taxon>
    </lineage>
</organism>
<proteinExistence type="inferred from homology"/>
<evidence type="ECO:0000255" key="1">
    <source>
        <dbReference type="HAMAP-Rule" id="MF_00255"/>
    </source>
</evidence>